<protein>
    <recommendedName>
        <fullName evidence="1">Phosphate acyltransferase</fullName>
        <ecNumber evidence="1">2.3.1.274</ecNumber>
    </recommendedName>
    <alternativeName>
        <fullName evidence="1">Acyl-ACP phosphotransacylase</fullName>
    </alternativeName>
    <alternativeName>
        <fullName evidence="1">Acyl-[acyl-carrier-protein]--phosphate acyltransferase</fullName>
    </alternativeName>
    <alternativeName>
        <fullName evidence="1">Phosphate-acyl-ACP acyltransferase</fullName>
    </alternativeName>
</protein>
<proteinExistence type="inferred from homology"/>
<dbReference type="EC" id="2.3.1.274" evidence="1"/>
<dbReference type="EMBL" id="CP000872">
    <property type="protein sequence ID" value="ABX61858.1"/>
    <property type="molecule type" value="Genomic_DNA"/>
</dbReference>
<dbReference type="RefSeq" id="WP_002963912.1">
    <property type="nucleotide sequence ID" value="NC_010103.1"/>
</dbReference>
<dbReference type="SMR" id="A9MAF5"/>
<dbReference type="GeneID" id="93016835"/>
<dbReference type="KEGG" id="bcs:BCAN_A0788"/>
<dbReference type="HOGENOM" id="CLU_039379_1_0_5"/>
<dbReference type="PhylomeDB" id="A9MAF5"/>
<dbReference type="UniPathway" id="UPA00085"/>
<dbReference type="Proteomes" id="UP000001385">
    <property type="component" value="Chromosome I"/>
</dbReference>
<dbReference type="GO" id="GO:0005737">
    <property type="term" value="C:cytoplasm"/>
    <property type="evidence" value="ECO:0007669"/>
    <property type="project" value="UniProtKB-SubCell"/>
</dbReference>
<dbReference type="GO" id="GO:0043811">
    <property type="term" value="F:phosphate:acyl-[acyl carrier protein] acyltransferase activity"/>
    <property type="evidence" value="ECO:0007669"/>
    <property type="project" value="UniProtKB-UniRule"/>
</dbReference>
<dbReference type="GO" id="GO:0006633">
    <property type="term" value="P:fatty acid biosynthetic process"/>
    <property type="evidence" value="ECO:0007669"/>
    <property type="project" value="UniProtKB-UniRule"/>
</dbReference>
<dbReference type="GO" id="GO:0008654">
    <property type="term" value="P:phospholipid biosynthetic process"/>
    <property type="evidence" value="ECO:0007669"/>
    <property type="project" value="UniProtKB-KW"/>
</dbReference>
<dbReference type="Gene3D" id="3.40.718.10">
    <property type="entry name" value="Isopropylmalate Dehydrogenase"/>
    <property type="match status" value="1"/>
</dbReference>
<dbReference type="HAMAP" id="MF_00019">
    <property type="entry name" value="PlsX"/>
    <property type="match status" value="1"/>
</dbReference>
<dbReference type="InterPro" id="IPR003664">
    <property type="entry name" value="FA_synthesis"/>
</dbReference>
<dbReference type="InterPro" id="IPR012281">
    <property type="entry name" value="Phospholipid_synth_PlsX-like"/>
</dbReference>
<dbReference type="NCBIfam" id="TIGR00182">
    <property type="entry name" value="plsX"/>
    <property type="match status" value="1"/>
</dbReference>
<dbReference type="PANTHER" id="PTHR30100">
    <property type="entry name" value="FATTY ACID/PHOSPHOLIPID SYNTHESIS PROTEIN PLSX"/>
    <property type="match status" value="1"/>
</dbReference>
<dbReference type="PANTHER" id="PTHR30100:SF1">
    <property type="entry name" value="PHOSPHATE ACYLTRANSFERASE"/>
    <property type="match status" value="1"/>
</dbReference>
<dbReference type="Pfam" id="PF02504">
    <property type="entry name" value="FA_synthesis"/>
    <property type="match status" value="1"/>
</dbReference>
<dbReference type="PIRSF" id="PIRSF002465">
    <property type="entry name" value="Phsphlp_syn_PlsX"/>
    <property type="match status" value="1"/>
</dbReference>
<dbReference type="SUPFAM" id="SSF53659">
    <property type="entry name" value="Isocitrate/Isopropylmalate dehydrogenase-like"/>
    <property type="match status" value="1"/>
</dbReference>
<evidence type="ECO:0000255" key="1">
    <source>
        <dbReference type="HAMAP-Rule" id="MF_00019"/>
    </source>
</evidence>
<sequence>MIKISIDAMGGDFGPEVVIPGAAKAFERHPDIRFIFFGLPAQVEPVLARYPKLKEASEFRASEVAIGMDDKPSQALRAGRGKSSMWQAIEAVKTGDADACVSAGNTGALMAMSKFCLRMMSDVERPAIAGIWPTLRGESIVLDIGATIGADARQLVDYAVMGAGMARALFEVRKPTVGLLNVGTEEVKGLDEIKEAGQILRDTPLDGLEYSGFVEGNDIGKGTVDVVVTEGFTGNIALKTAEGTARQMAELLRQAMSRTLLAKIGYVFAKGAFDRLREKMDPNKVNGGVFLGLSGIVIKSHGGANAEGFCSAVEVGYDMVRNRLLEKIEADLAHFHHSHSHVSSKA</sequence>
<name>PLSX_BRUC2</name>
<feature type="chain" id="PRO_1000074158" description="Phosphate acyltransferase">
    <location>
        <begin position="1"/>
        <end position="346"/>
    </location>
</feature>
<organism>
    <name type="scientific">Brucella canis (strain ATCC 23365 / NCTC 10854 / RM-666)</name>
    <dbReference type="NCBI Taxonomy" id="483179"/>
    <lineage>
        <taxon>Bacteria</taxon>
        <taxon>Pseudomonadati</taxon>
        <taxon>Pseudomonadota</taxon>
        <taxon>Alphaproteobacteria</taxon>
        <taxon>Hyphomicrobiales</taxon>
        <taxon>Brucellaceae</taxon>
        <taxon>Brucella/Ochrobactrum group</taxon>
        <taxon>Brucella</taxon>
    </lineage>
</organism>
<accession>A9MAF5</accession>
<reference key="1">
    <citation type="submission" date="2007-10" db="EMBL/GenBank/DDBJ databases">
        <title>Brucella canis ATCC 23365 whole genome shotgun sequencing project.</title>
        <authorList>
            <person name="Setubal J.C."/>
            <person name="Bowns C."/>
            <person name="Boyle S."/>
            <person name="Crasta O.R."/>
            <person name="Czar M.J."/>
            <person name="Dharmanolla C."/>
            <person name="Gillespie J.J."/>
            <person name="Kenyon R.W."/>
            <person name="Lu J."/>
            <person name="Mane S."/>
            <person name="Mohapatra S."/>
            <person name="Nagrani S."/>
            <person name="Purkayastha A."/>
            <person name="Rajasimha H.K."/>
            <person name="Shallom J.M."/>
            <person name="Shallom S."/>
            <person name="Shukla M."/>
            <person name="Snyder E.E."/>
            <person name="Sobral B.W."/>
            <person name="Wattam A.R."/>
            <person name="Will R."/>
            <person name="Williams K."/>
            <person name="Yoo H."/>
            <person name="Bruce D."/>
            <person name="Detter C."/>
            <person name="Munk C."/>
            <person name="Brettin T.S."/>
        </authorList>
    </citation>
    <scope>NUCLEOTIDE SEQUENCE [LARGE SCALE GENOMIC DNA]</scope>
    <source>
        <strain>ATCC 23365 / NCTC 10854 / RM-666</strain>
    </source>
</reference>
<keyword id="KW-0963">Cytoplasm</keyword>
<keyword id="KW-0444">Lipid biosynthesis</keyword>
<keyword id="KW-0443">Lipid metabolism</keyword>
<keyword id="KW-0594">Phospholipid biosynthesis</keyword>
<keyword id="KW-1208">Phospholipid metabolism</keyword>
<keyword id="KW-1185">Reference proteome</keyword>
<keyword id="KW-0808">Transferase</keyword>
<comment type="function">
    <text evidence="1">Catalyzes the reversible formation of acyl-phosphate (acyl-PO(4)) from acyl-[acyl-carrier-protein] (acyl-ACP). This enzyme utilizes acyl-ACP as fatty acyl donor, but not acyl-CoA.</text>
</comment>
<comment type="catalytic activity">
    <reaction evidence="1">
        <text>a fatty acyl-[ACP] + phosphate = an acyl phosphate + holo-[ACP]</text>
        <dbReference type="Rhea" id="RHEA:42292"/>
        <dbReference type="Rhea" id="RHEA-COMP:9685"/>
        <dbReference type="Rhea" id="RHEA-COMP:14125"/>
        <dbReference type="ChEBI" id="CHEBI:43474"/>
        <dbReference type="ChEBI" id="CHEBI:59918"/>
        <dbReference type="ChEBI" id="CHEBI:64479"/>
        <dbReference type="ChEBI" id="CHEBI:138651"/>
        <dbReference type="EC" id="2.3.1.274"/>
    </reaction>
</comment>
<comment type="pathway">
    <text evidence="1">Lipid metabolism; phospholipid metabolism.</text>
</comment>
<comment type="subunit">
    <text evidence="1">Homodimer. Probably interacts with PlsY.</text>
</comment>
<comment type="subcellular location">
    <subcellularLocation>
        <location evidence="1">Cytoplasm</location>
    </subcellularLocation>
    <text evidence="1">Associated with the membrane possibly through PlsY.</text>
</comment>
<comment type="similarity">
    <text evidence="1">Belongs to the PlsX family.</text>
</comment>
<gene>
    <name evidence="1" type="primary">plsX</name>
    <name type="ordered locus">BCAN_A0788</name>
</gene>